<protein>
    <recommendedName>
        <fullName>Peroxiredoxin-like 2A</fullName>
    </recommendedName>
    <alternativeName>
        <fullName>Peroxiredoxin-like 2 activated in M-CSF stimulated monocytes</fullName>
        <shortName>Protein PAMM</shortName>
    </alternativeName>
    <alternativeName>
        <fullName>Redox-regulatory protein FAM213A</fullName>
    </alternativeName>
</protein>
<proteinExistence type="evidence at transcript level"/>
<organism>
    <name type="scientific">Bos taurus</name>
    <name type="common">Bovine</name>
    <dbReference type="NCBI Taxonomy" id="9913"/>
    <lineage>
        <taxon>Eukaryota</taxon>
        <taxon>Metazoa</taxon>
        <taxon>Chordata</taxon>
        <taxon>Craniata</taxon>
        <taxon>Vertebrata</taxon>
        <taxon>Euteleostomi</taxon>
        <taxon>Mammalia</taxon>
        <taxon>Eutheria</taxon>
        <taxon>Laurasiatheria</taxon>
        <taxon>Artiodactyla</taxon>
        <taxon>Ruminantia</taxon>
        <taxon>Pecora</taxon>
        <taxon>Bovidae</taxon>
        <taxon>Bovinae</taxon>
        <taxon>Bos</taxon>
    </lineage>
</organism>
<comment type="function">
    <text evidence="2">Involved in redox regulation of the cell. Acts as an antioxidant. Inhibits TNFSF11-induced NFKB1 and JUN activation and osteoclast differentiation. May affect bone resorption and help to maintain bone mass. Acts as a negative regulator of macrophage-mediated inflammation by inhibiting macrophage production of inflammatory cytokines, probably through suppression of the MAPK signaling pathway.</text>
</comment>
<comment type="subcellular location">
    <subcellularLocation>
        <location evidence="2">Cytoplasm</location>
    </subcellularLocation>
    <subcellularLocation>
        <location evidence="2">Secreted</location>
    </subcellularLocation>
    <text evidence="2">Secreted from mature adipocytes but not from preadipocytes.</text>
</comment>
<comment type="miscellaneous">
    <text>The active site cysteines correspond to the redox-active cysteines of peroxiredoxins.</text>
</comment>
<comment type="similarity">
    <text evidence="3">Belongs to the peroxiredoxin-like PRXL2 family. PRXL2A subfamily.</text>
</comment>
<keyword id="KW-0049">Antioxidant</keyword>
<keyword id="KW-0963">Cytoplasm</keyword>
<keyword id="KW-0676">Redox-active center</keyword>
<keyword id="KW-1185">Reference proteome</keyword>
<keyword id="KW-0964">Secreted</keyword>
<gene>
    <name type="primary">PRXL2A</name>
    <name type="synonym">FAM213A</name>
    <name type="synonym">PAMM</name>
</gene>
<dbReference type="EMBL" id="BC103249">
    <property type="protein sequence ID" value="AAI03250.1"/>
    <property type="molecule type" value="mRNA"/>
</dbReference>
<dbReference type="RefSeq" id="NP_001029771.1">
    <property type="nucleotide sequence ID" value="NM_001034599.2"/>
</dbReference>
<dbReference type="RefSeq" id="XP_005226485.1">
    <property type="nucleotide sequence ID" value="XM_005226428.5"/>
</dbReference>
<dbReference type="SMR" id="Q3ZBK2"/>
<dbReference type="FunCoup" id="Q3ZBK2">
    <property type="interactions" value="205"/>
</dbReference>
<dbReference type="STRING" id="9913.ENSBTAP00000028551"/>
<dbReference type="PaxDb" id="9913-ENSBTAP00000028551"/>
<dbReference type="PeptideAtlas" id="Q3ZBK2"/>
<dbReference type="Ensembl" id="ENSBTAT00000028551.6">
    <property type="protein sequence ID" value="ENSBTAP00000028551.5"/>
    <property type="gene ID" value="ENSBTAG00000021416.7"/>
</dbReference>
<dbReference type="GeneID" id="534049"/>
<dbReference type="KEGG" id="bta:534049"/>
<dbReference type="CTD" id="84293"/>
<dbReference type="VEuPathDB" id="HostDB:ENSBTAG00000021416"/>
<dbReference type="VGNC" id="VGNC:28791">
    <property type="gene designation" value="PRXL2A"/>
</dbReference>
<dbReference type="eggNOG" id="KOG4498">
    <property type="taxonomic scope" value="Eukaryota"/>
</dbReference>
<dbReference type="GeneTree" id="ENSGT00940000161199"/>
<dbReference type="HOGENOM" id="CLU_086062_0_0_1"/>
<dbReference type="InParanoid" id="Q3ZBK2"/>
<dbReference type="OMA" id="SMGMWSL"/>
<dbReference type="OrthoDB" id="40334at2759"/>
<dbReference type="TreeFam" id="TF313804"/>
<dbReference type="Proteomes" id="UP000009136">
    <property type="component" value="Chromosome 28"/>
</dbReference>
<dbReference type="Bgee" id="ENSBTAG00000021416">
    <property type="expression patterns" value="Expressed in oviduct epithelium and 106 other cell types or tissues"/>
</dbReference>
<dbReference type="GO" id="GO:0005737">
    <property type="term" value="C:cytoplasm"/>
    <property type="evidence" value="ECO:0000318"/>
    <property type="project" value="GO_Central"/>
</dbReference>
<dbReference type="GO" id="GO:0005576">
    <property type="term" value="C:extracellular region"/>
    <property type="evidence" value="ECO:0007669"/>
    <property type="project" value="UniProtKB-SubCell"/>
</dbReference>
<dbReference type="GO" id="GO:0016209">
    <property type="term" value="F:antioxidant activity"/>
    <property type="evidence" value="ECO:0000318"/>
    <property type="project" value="GO_Central"/>
</dbReference>
<dbReference type="CDD" id="cd02970">
    <property type="entry name" value="PRX_like2"/>
    <property type="match status" value="1"/>
</dbReference>
<dbReference type="FunFam" id="3.40.30.10:FF:000312">
    <property type="entry name" value="redox-regulatory protein FAM213A isoform X1"/>
    <property type="match status" value="1"/>
</dbReference>
<dbReference type="InterPro" id="IPR032801">
    <property type="entry name" value="PXL2A/B/C"/>
</dbReference>
<dbReference type="InterPro" id="IPR036249">
    <property type="entry name" value="Thioredoxin-like_sf"/>
</dbReference>
<dbReference type="PANTHER" id="PTHR28630">
    <property type="match status" value="1"/>
</dbReference>
<dbReference type="PANTHER" id="PTHR28630:SF31">
    <property type="entry name" value="PEROXIREDOXIN-LIKE 2A"/>
    <property type="match status" value="1"/>
</dbReference>
<dbReference type="Pfam" id="PF13911">
    <property type="entry name" value="AhpC-TSA_2"/>
    <property type="match status" value="1"/>
</dbReference>
<dbReference type="SUPFAM" id="SSF52833">
    <property type="entry name" value="Thioredoxin-like"/>
    <property type="match status" value="1"/>
</dbReference>
<name>PXL2A_BOVIN</name>
<feature type="chain" id="PRO_0000271444" description="Peroxiredoxin-like 2A">
    <location>
        <begin position="1"/>
        <end position="218"/>
    </location>
</feature>
<feature type="region of interest" description="Thioredoxin fold">
    <location>
        <begin position="3"/>
        <end position="101"/>
    </location>
</feature>
<feature type="active site" description="Redox-active" evidence="1">
    <location>
        <position position="74"/>
    </location>
</feature>
<feature type="active site" description="Redox-active" evidence="1">
    <location>
        <position position="77"/>
    </location>
</feature>
<accession>Q3ZBK2</accession>
<reference key="1">
    <citation type="submission" date="2005-08" db="EMBL/GenBank/DDBJ databases">
        <authorList>
            <consortium name="NIH - Mammalian Gene Collection (MGC) project"/>
        </authorList>
    </citation>
    <scope>NUCLEOTIDE SEQUENCE [LARGE SCALE MRNA]</scope>
    <source>
        <strain>Hereford</strain>
        <tissue>Fetal liver</tissue>
    </source>
</reference>
<sequence length="218" mass="24355">MGMWSIGAGAIGVAALALLLANTDMFLAKPEKAALEYLEDIDLKTLEKDAVTFKAKALWEKNGAVIMAVRRPGCFLCREEATDLSSLKPKLDELGVPLYAVVKEHIKNEVKDFQPYFKGEIFLDENKKFYGPQRRKMMFMGFVRLGVWQNFFRAWNGGFSGNLDGEGFILGGVFVMGPGKQGILLEHREKEFGDKVNLTSVLEAARKIRPQTSASEKQ</sequence>
<evidence type="ECO:0000250" key="1"/>
<evidence type="ECO:0000250" key="2">
    <source>
        <dbReference type="UniProtKB" id="Q9BRX8"/>
    </source>
</evidence>
<evidence type="ECO:0000305" key="3"/>